<sequence length="313" mass="33747">MRRGALLAGALAAYAAYLVLGALLVARLEGPHEARLRAELETLRAQLLQRSPCVAAPALDAFVERVLAAGRLGRVVLANASGSANASDPAWDFASALFFASTLITTVGYGYTTPLTDAGKAFSIAFALLGVPTTMLLLTASAQRLSLLLTHVPLSWLSMRWGWDPRRAACWHLVALLGVVVTVCFLVPAVIFAHLEEAWSFLDAFYFCFISLSTIGLGDYVPGEAPGQPYRALYKVLVTVYLFLGLVAMVLVLQTFRHVSDLHGLTELILLPPPCPASFNADEDDRVDILGPQPESHQQLSASSHTDYASIPR</sequence>
<keyword id="KW-0025">Alternative splicing</keyword>
<keyword id="KW-1015">Disulfide bond</keyword>
<keyword id="KW-0967">Endosome</keyword>
<keyword id="KW-0325">Glycoprotein</keyword>
<keyword id="KW-0407">Ion channel</keyword>
<keyword id="KW-0406">Ion transport</keyword>
<keyword id="KW-0458">Lysosome</keyword>
<keyword id="KW-0472">Membrane</keyword>
<keyword id="KW-0479">Metal-binding</keyword>
<keyword id="KW-0630">Potassium</keyword>
<keyword id="KW-0631">Potassium channel</keyword>
<keyword id="KW-0633">Potassium transport</keyword>
<keyword id="KW-1267">Proteomics identification</keyword>
<keyword id="KW-1185">Reference proteome</keyword>
<keyword id="KW-0812">Transmembrane</keyword>
<keyword id="KW-1133">Transmembrane helix</keyword>
<keyword id="KW-0813">Transport</keyword>
<keyword id="KW-0851">Voltage-gated channel</keyword>
<comment type="function">
    <text evidence="4 8 9">K(+) channel that conducts outward rectifying currents at the membranes of the endolysosomal system (PubMed:10887187, PubMed:28381826). Active in lysosomes where it regulates lysosome numbers and size (PubMed:28381826). In macrophages, enables K(+) efflux coupled to ATP-induced NLRP3 inflammasome activation upon bacterial infection. Cooperates with ATP-gated P2RX7 channels to activate NLRP3 inflammasome, with P2RX7 conducting Ca(2+) and Na(+) influx that sets the membrane potential for K(+) efflux (By similarity).</text>
</comment>
<comment type="function">
    <molecule>Isoform 2</molecule>
    <text evidence="8">Does not display channel activity.</text>
</comment>
<comment type="catalytic activity">
    <reaction evidence="8 9">
        <text>K(+)(in) = K(+)(out)</text>
        <dbReference type="Rhea" id="RHEA:29463"/>
        <dbReference type="ChEBI" id="CHEBI:29103"/>
    </reaction>
</comment>
<comment type="subunit">
    <text evidence="2">Homodimer; disulfide-linked.</text>
</comment>
<comment type="subcellular location">
    <subcellularLocation>
        <location evidence="9">Late endosome membrane</location>
        <topology evidence="5">Multi-pass membrane protein</topology>
    </subcellularLocation>
    <subcellularLocation>
        <location evidence="9">Lysosome membrane</location>
        <topology evidence="5">Multi-pass membrane protein</topology>
    </subcellularLocation>
</comment>
<comment type="alternative products">
    <event type="alternative splicing"/>
    <isoform>
        <id>Q9Y257-1</id>
        <name>1</name>
        <sequence type="displayed"/>
    </isoform>
    <isoform>
        <id>Q9Y257-2</id>
        <name>2</name>
        <sequence type="described" ref="VSP_006692"/>
    </isoform>
</comment>
<comment type="tissue specificity">
    <text evidence="8">Widespread expression, detected in all tissues tested except for skeletal muscle. Strongest expression in placenta, pancreas, heart, colon and spleen, lower levels detected in peripheral blood leukocytes, lung, liver, kidney and thymus. Lowest expression detected in brain.</text>
</comment>
<comment type="domain">
    <text evidence="3">Each subunit contributes two pore-forming domains 1 and 2 which assemble to form a single pore with M2 and M4 transmembrane helices lining the central cavity and M1 and M3 facing the lipid bilayer. The transmembrane helices are bridged by the selectivity filters 1 and 2 that coordinate the permeant ions. Up to four ions can simultaneously occupy the selectivity filter and at least two elementary charges must translocate across the filter to convert it into the open conformation.</text>
</comment>
<comment type="PTM">
    <text evidence="1">N-glycosylation is necessary for targeting to lysosomes.</text>
</comment>
<comment type="similarity">
    <text evidence="13">Belongs to the two pore domain potassium channel (TC 1.A.1.8) family.</text>
</comment>
<protein>
    <recommendedName>
        <fullName>Potassium channel subfamily K member 6</fullName>
    </recommendedName>
    <alternativeName>
        <fullName>Inward rectifying potassium channel protein TWIK-2</fullName>
    </alternativeName>
    <alternativeName>
        <fullName evidence="11">TWIK-originated similarity sequence</fullName>
    </alternativeName>
</protein>
<organism>
    <name type="scientific">Homo sapiens</name>
    <name type="common">Human</name>
    <dbReference type="NCBI Taxonomy" id="9606"/>
    <lineage>
        <taxon>Eukaryota</taxon>
        <taxon>Metazoa</taxon>
        <taxon>Chordata</taxon>
        <taxon>Craniata</taxon>
        <taxon>Vertebrata</taxon>
        <taxon>Euteleostomi</taxon>
        <taxon>Mammalia</taxon>
        <taxon>Eutheria</taxon>
        <taxon>Euarchontoglires</taxon>
        <taxon>Primates</taxon>
        <taxon>Haplorrhini</taxon>
        <taxon>Catarrhini</taxon>
        <taxon>Hominidae</taxon>
        <taxon>Homo</taxon>
    </lineage>
</organism>
<evidence type="ECO:0000250" key="1">
    <source>
        <dbReference type="UniProtKB" id="G3V8R8"/>
    </source>
</evidence>
<evidence type="ECO:0000250" key="2">
    <source>
        <dbReference type="UniProtKB" id="O00180"/>
    </source>
</evidence>
<evidence type="ECO:0000250" key="3">
    <source>
        <dbReference type="UniProtKB" id="P57789"/>
    </source>
</evidence>
<evidence type="ECO:0000250" key="4">
    <source>
        <dbReference type="UniProtKB" id="Q3TBV4"/>
    </source>
</evidence>
<evidence type="ECO:0000255" key="5"/>
<evidence type="ECO:0000256" key="6">
    <source>
        <dbReference type="SAM" id="MobiDB-lite"/>
    </source>
</evidence>
<evidence type="ECO:0000269" key="7">
    <source>
    </source>
</evidence>
<evidence type="ECO:0000269" key="8">
    <source>
    </source>
</evidence>
<evidence type="ECO:0000269" key="9">
    <source>
    </source>
</evidence>
<evidence type="ECO:0000303" key="10">
    <source>
    </source>
</evidence>
<evidence type="ECO:0000303" key="11">
    <source>
    </source>
</evidence>
<evidence type="ECO:0000303" key="12">
    <source>
    </source>
</evidence>
<evidence type="ECO:0000305" key="13"/>
<evidence type="ECO:0000312" key="14">
    <source>
        <dbReference type="HGNC" id="HGNC:6281"/>
    </source>
</evidence>
<accession>Q9Y257</accession>
<accession>Q9HB47</accession>
<dbReference type="EMBL" id="AF134149">
    <property type="protein sequence ID" value="AAD22980.1"/>
    <property type="molecule type" value="mRNA"/>
</dbReference>
<dbReference type="EMBL" id="AF117708">
    <property type="protein sequence ID" value="AAD24000.1"/>
    <property type="molecule type" value="mRNA"/>
</dbReference>
<dbReference type="EMBL" id="AF281302">
    <property type="protein sequence ID" value="AAG10506.1"/>
    <property type="molecule type" value="mRNA"/>
</dbReference>
<dbReference type="EMBL" id="AF281303">
    <property type="protein sequence ID" value="AAG10507.1"/>
    <property type="molecule type" value="mRNA"/>
</dbReference>
<dbReference type="EMBL" id="AJ297404">
    <property type="protein sequence ID" value="CAC15489.1"/>
    <property type="molecule type" value="Genomic_DNA"/>
</dbReference>
<dbReference type="EMBL" id="AJ297405">
    <property type="protein sequence ID" value="CAC15489.1"/>
    <property type="status" value="JOINED"/>
    <property type="molecule type" value="Genomic_DNA"/>
</dbReference>
<dbReference type="EMBL" id="BC004367">
    <property type="protein sequence ID" value="AAH04367.1"/>
    <property type="molecule type" value="mRNA"/>
</dbReference>
<dbReference type="CCDS" id="CCDS12513.1">
    <molecule id="Q9Y257-1"/>
</dbReference>
<dbReference type="RefSeq" id="NP_004814.1">
    <molecule id="Q9Y257-1"/>
    <property type="nucleotide sequence ID" value="NM_004823.3"/>
</dbReference>
<dbReference type="RefSeq" id="XP_011525828.1">
    <property type="nucleotide sequence ID" value="XM_011527526.1"/>
</dbReference>
<dbReference type="RefSeq" id="XP_047295682.1">
    <molecule id="Q9Y257-2"/>
    <property type="nucleotide sequence ID" value="XM_047439726.1"/>
</dbReference>
<dbReference type="RefSeq" id="XP_054178664.1">
    <molecule id="Q9Y257-2"/>
    <property type="nucleotide sequence ID" value="XM_054322689.1"/>
</dbReference>
<dbReference type="SMR" id="Q9Y257"/>
<dbReference type="FunCoup" id="Q9Y257">
    <property type="interactions" value="179"/>
</dbReference>
<dbReference type="STRING" id="9606.ENSP00000263372"/>
<dbReference type="DrugBank" id="DB00308">
    <property type="generic name" value="Ibutilide"/>
</dbReference>
<dbReference type="DrugBank" id="DB00908">
    <property type="generic name" value="Quinidine"/>
</dbReference>
<dbReference type="TCDB" id="1.A.1.8.3">
    <property type="family name" value="the voltage-gated ion channel (vic) superfamily"/>
</dbReference>
<dbReference type="GlyCosmos" id="Q9Y257">
    <property type="glycosylation" value="2 sites, No reported glycans"/>
</dbReference>
<dbReference type="GlyGen" id="Q9Y257">
    <property type="glycosylation" value="2 sites"/>
</dbReference>
<dbReference type="iPTMnet" id="Q9Y257"/>
<dbReference type="PhosphoSitePlus" id="Q9Y257"/>
<dbReference type="BioMuta" id="KCNK6"/>
<dbReference type="DMDM" id="13124108"/>
<dbReference type="jPOST" id="Q9Y257"/>
<dbReference type="MassIVE" id="Q9Y257"/>
<dbReference type="PaxDb" id="9606-ENSP00000263372"/>
<dbReference type="PeptideAtlas" id="Q9Y257"/>
<dbReference type="ProteomicsDB" id="85659">
    <molecule id="Q9Y257-1"/>
</dbReference>
<dbReference type="Antibodypedia" id="30028">
    <property type="antibodies" value="108 antibodies from 25 providers"/>
</dbReference>
<dbReference type="DNASU" id="9424"/>
<dbReference type="Ensembl" id="ENST00000263372.5">
    <molecule id="Q9Y257-1"/>
    <property type="protein sequence ID" value="ENSP00000263372.2"/>
    <property type="gene ID" value="ENSG00000099337.5"/>
</dbReference>
<dbReference type="GeneID" id="9424"/>
<dbReference type="KEGG" id="hsa:9424"/>
<dbReference type="MANE-Select" id="ENST00000263372.5">
    <property type="protein sequence ID" value="ENSP00000263372.2"/>
    <property type="RefSeq nucleotide sequence ID" value="NM_004823.3"/>
    <property type="RefSeq protein sequence ID" value="NP_004814.1"/>
</dbReference>
<dbReference type="UCSC" id="uc002oic.4">
    <molecule id="Q9Y257-1"/>
    <property type="organism name" value="human"/>
</dbReference>
<dbReference type="AGR" id="HGNC:6281"/>
<dbReference type="CTD" id="9424"/>
<dbReference type="DisGeNET" id="9424"/>
<dbReference type="GeneCards" id="KCNK6"/>
<dbReference type="HGNC" id="HGNC:6281">
    <property type="gene designation" value="KCNK6"/>
</dbReference>
<dbReference type="HPA" id="ENSG00000099337">
    <property type="expression patterns" value="Low tissue specificity"/>
</dbReference>
<dbReference type="MIM" id="603939">
    <property type="type" value="gene"/>
</dbReference>
<dbReference type="neXtProt" id="NX_Q9Y257"/>
<dbReference type="OpenTargets" id="ENSG00000099337"/>
<dbReference type="PharmGKB" id="PA30063"/>
<dbReference type="VEuPathDB" id="HostDB:ENSG00000099337"/>
<dbReference type="eggNOG" id="KOG1418">
    <property type="taxonomic scope" value="Eukaryota"/>
</dbReference>
<dbReference type="GeneTree" id="ENSGT00940000160509"/>
<dbReference type="HOGENOM" id="CLU_022504_6_0_1"/>
<dbReference type="InParanoid" id="Q9Y257"/>
<dbReference type="OMA" id="IERPMED"/>
<dbReference type="OrthoDB" id="297496at2759"/>
<dbReference type="PAN-GO" id="Q9Y257">
    <property type="GO annotations" value="5 GO annotations based on evolutionary models"/>
</dbReference>
<dbReference type="PhylomeDB" id="Q9Y257"/>
<dbReference type="TreeFam" id="TF313947"/>
<dbReference type="PathwayCommons" id="Q9Y257"/>
<dbReference type="Reactome" id="R-HSA-1299308">
    <property type="pathway name" value="Tandem of pore domain in a weak inwardly rectifying K+ channels (TWIK)"/>
</dbReference>
<dbReference type="Reactome" id="R-HSA-5576886">
    <property type="pathway name" value="Phase 4 - resting membrane potential"/>
</dbReference>
<dbReference type="BioGRID-ORCS" id="9424">
    <property type="hits" value="7 hits in 1071 CRISPR screens"/>
</dbReference>
<dbReference type="ChiTaRS" id="KCNK6">
    <property type="organism name" value="human"/>
</dbReference>
<dbReference type="GeneWiki" id="KCNK6"/>
<dbReference type="GenomeRNAi" id="9424"/>
<dbReference type="Pharos" id="Q9Y257">
    <property type="development level" value="Tbio"/>
</dbReference>
<dbReference type="PRO" id="PR:Q9Y257"/>
<dbReference type="Proteomes" id="UP000005640">
    <property type="component" value="Chromosome 19"/>
</dbReference>
<dbReference type="RNAct" id="Q9Y257">
    <property type="molecule type" value="protein"/>
</dbReference>
<dbReference type="Bgee" id="ENSG00000099337">
    <property type="expression patterns" value="Expressed in lower esophagus mucosa and 139 other cell types or tissues"/>
</dbReference>
<dbReference type="ExpressionAtlas" id="Q9Y257">
    <property type="expression patterns" value="baseline and differential"/>
</dbReference>
<dbReference type="GO" id="GO:0031902">
    <property type="term" value="C:late endosome membrane"/>
    <property type="evidence" value="ECO:0000250"/>
    <property type="project" value="UniProtKB"/>
</dbReference>
<dbReference type="GO" id="GO:0005765">
    <property type="term" value="C:lysosomal membrane"/>
    <property type="evidence" value="ECO:0000314"/>
    <property type="project" value="UniProtKB"/>
</dbReference>
<dbReference type="GO" id="GO:0005886">
    <property type="term" value="C:plasma membrane"/>
    <property type="evidence" value="ECO:0000318"/>
    <property type="project" value="GO_Central"/>
</dbReference>
<dbReference type="GO" id="GO:0008076">
    <property type="term" value="C:voltage-gated potassium channel complex"/>
    <property type="evidence" value="ECO:0000304"/>
    <property type="project" value="ProtInc"/>
</dbReference>
<dbReference type="GO" id="GO:0005242">
    <property type="term" value="F:inward rectifier potassium channel activity"/>
    <property type="evidence" value="ECO:0000304"/>
    <property type="project" value="ProtInc"/>
</dbReference>
<dbReference type="GO" id="GO:0046872">
    <property type="term" value="F:metal ion binding"/>
    <property type="evidence" value="ECO:0007669"/>
    <property type="project" value="UniProtKB-KW"/>
</dbReference>
<dbReference type="GO" id="GO:0015271">
    <property type="term" value="F:outward rectifier potassium channel activity"/>
    <property type="evidence" value="ECO:0000318"/>
    <property type="project" value="GO_Central"/>
</dbReference>
<dbReference type="GO" id="GO:0005267">
    <property type="term" value="F:potassium channel activity"/>
    <property type="evidence" value="ECO:0000314"/>
    <property type="project" value="UniProtKB"/>
</dbReference>
<dbReference type="GO" id="GO:0022841">
    <property type="term" value="F:potassium ion leak channel activity"/>
    <property type="evidence" value="ECO:0000318"/>
    <property type="project" value="GO_Central"/>
</dbReference>
<dbReference type="GO" id="GO:0003085">
    <property type="term" value="P:negative regulation of systemic arterial blood pressure"/>
    <property type="evidence" value="ECO:0007669"/>
    <property type="project" value="Ensembl"/>
</dbReference>
<dbReference type="GO" id="GO:1900227">
    <property type="term" value="P:positive regulation of NLRP3 inflammasome complex assembly"/>
    <property type="evidence" value="ECO:0000250"/>
    <property type="project" value="UniProtKB"/>
</dbReference>
<dbReference type="GO" id="GO:0071805">
    <property type="term" value="P:potassium ion transmembrane transport"/>
    <property type="evidence" value="ECO:0000318"/>
    <property type="project" value="GO_Central"/>
</dbReference>
<dbReference type="GO" id="GO:0006813">
    <property type="term" value="P:potassium ion transport"/>
    <property type="evidence" value="ECO:0000304"/>
    <property type="project" value="ProtInc"/>
</dbReference>
<dbReference type="GO" id="GO:0062196">
    <property type="term" value="P:regulation of lysosome size"/>
    <property type="evidence" value="ECO:0000250"/>
    <property type="project" value="UniProtKB"/>
</dbReference>
<dbReference type="GO" id="GO:0060075">
    <property type="term" value="P:regulation of resting membrane potential"/>
    <property type="evidence" value="ECO:0007669"/>
    <property type="project" value="Ensembl"/>
</dbReference>
<dbReference type="FunFam" id="1.10.287.70:FF:000119">
    <property type="entry name" value="Potassium channel subfamily K member"/>
    <property type="match status" value="1"/>
</dbReference>
<dbReference type="Gene3D" id="1.10.287.70">
    <property type="match status" value="1"/>
</dbReference>
<dbReference type="InterPro" id="IPR003280">
    <property type="entry name" value="2pore_dom_K_chnl"/>
</dbReference>
<dbReference type="InterPro" id="IPR003092">
    <property type="entry name" value="2pore_dom_K_chnl_TASK"/>
</dbReference>
<dbReference type="InterPro" id="IPR005408">
    <property type="entry name" value="2pore_dom_K_chnl_TWIK"/>
</dbReference>
<dbReference type="InterPro" id="IPR005409">
    <property type="entry name" value="2pore_dom_K_chnl_TWIK2"/>
</dbReference>
<dbReference type="InterPro" id="IPR013099">
    <property type="entry name" value="K_chnl_dom"/>
</dbReference>
<dbReference type="PANTHER" id="PTHR11003:SF28">
    <property type="entry name" value="POTASSIUM CHANNEL SUBFAMILY K MEMBER 6"/>
    <property type="match status" value="1"/>
</dbReference>
<dbReference type="PANTHER" id="PTHR11003">
    <property type="entry name" value="POTASSIUM CHANNEL, SUBFAMILY K"/>
    <property type="match status" value="1"/>
</dbReference>
<dbReference type="Pfam" id="PF07885">
    <property type="entry name" value="Ion_trans_2"/>
    <property type="match status" value="2"/>
</dbReference>
<dbReference type="PIRSF" id="PIRSF038061">
    <property type="entry name" value="K_channel_subfamily_K_type"/>
    <property type="match status" value="1"/>
</dbReference>
<dbReference type="PRINTS" id="PR01333">
    <property type="entry name" value="2POREKCHANEL"/>
</dbReference>
<dbReference type="PRINTS" id="PR01587">
    <property type="entry name" value="TWIK2CHANNEL"/>
</dbReference>
<dbReference type="PRINTS" id="PR01586">
    <property type="entry name" value="TWIKCHANNEL"/>
</dbReference>
<dbReference type="SUPFAM" id="SSF81324">
    <property type="entry name" value="Voltage-gated potassium channels"/>
    <property type="match status" value="2"/>
</dbReference>
<reference key="1">
    <citation type="journal article" date="1999" name="FEBS Lett.">
        <title>Identification and cloning of TWIK-originated similarity sequence (TOSS): a novel human 2-pore K+ channel principal subunit.</title>
        <authorList>
            <person name="Pountney D.J."/>
            <person name="Gulkarov I."/>
            <person name="Vega-Saenz de Miera E."/>
            <person name="Holmes D."/>
            <person name="Saganich M."/>
            <person name="Rudy B."/>
            <person name="Artman M."/>
            <person name="Coetzee W.A."/>
        </authorList>
    </citation>
    <scope>NUCLEOTIDE SEQUENCE [MRNA] (ISOFORM 1)</scope>
    <source>
        <tissue>Testis</tissue>
    </source>
</reference>
<reference key="2">
    <citation type="journal article" date="1999" name="J. Biol. Chem.">
        <title>TWIK-2, a new weak inward rectifying member of the tandem pore domain potassium channel family.</title>
        <authorList>
            <person name="Chavez R.A."/>
            <person name="Gray A.T."/>
            <person name="Zhao B.B."/>
            <person name="Kindler C.H."/>
            <person name="Mazurek M.J."/>
            <person name="Mehta Y."/>
            <person name="Forsayeth J.R."/>
            <person name="Yost C.S."/>
        </authorList>
    </citation>
    <scope>NUCLEOTIDE SEQUENCE [MRNA] (ISOFORM 1)</scope>
    <scope>MUTAGENESIS OF CYS-53</scope>
    <source>
        <tissue>Brain</tissue>
    </source>
</reference>
<reference key="3">
    <citation type="journal article" date="1999" name="J. Biol. Chem.">
        <authorList>
            <person name="Chavez R.A."/>
            <person name="Gray A.T."/>
            <person name="Zhao B.B."/>
            <person name="Kindler C.H."/>
            <person name="Mazurek M.J."/>
            <person name="Mehta Y."/>
            <person name="Forsayeth J.R."/>
            <person name="Yost C.S."/>
        </authorList>
    </citation>
    <scope>ERRATUM OF PUBMED:10075682</scope>
</reference>
<reference key="4">
    <citation type="journal article" date="2000" name="J. Biol. Chem.">
        <title>TWIK-2, an inactivating 2P domain K+ channel.</title>
        <authorList>
            <person name="Patel A.J."/>
            <person name="Maingret F."/>
            <person name="Magnone V."/>
            <person name="Fosset M."/>
            <person name="Lazdunski M."/>
            <person name="Honore E."/>
        </authorList>
    </citation>
    <scope>NUCLEOTIDE SEQUENCE [MRNA] (ISOFORMS 1 AND 2)</scope>
    <scope>FUNCTION</scope>
    <scope>TRANSPORTER ACTIVITY</scope>
    <scope>TISSUE SPECIFICITY</scope>
</reference>
<reference key="5">
    <citation type="submission" date="2000-06" db="EMBL/GenBank/DDBJ databases">
        <title>Genomic structure and mutation screening of the TWIK-2 gene.</title>
        <authorList>
            <person name="Chen A.F."/>
            <person name="Gray A.T."/>
            <person name="Chen A.H."/>
            <person name="Kindler C.H."/>
            <person name="Mhatre A.N."/>
            <person name="Yost C.S."/>
            <person name="Lalwani A.K."/>
            <person name="Smith R.J.H."/>
        </authorList>
    </citation>
    <scope>NUCLEOTIDE SEQUENCE (ISOFORM 1)</scope>
</reference>
<reference key="6">
    <citation type="journal article" date="2004" name="Genome Res.">
        <title>The status, quality, and expansion of the NIH full-length cDNA project: the Mammalian Gene Collection (MGC).</title>
        <authorList>
            <consortium name="The MGC Project Team"/>
        </authorList>
    </citation>
    <scope>NUCLEOTIDE SEQUENCE [LARGE SCALE MRNA] (ISOFORM 1)</scope>
    <source>
        <tissue>Pancreas</tissue>
    </source>
</reference>
<reference key="7">
    <citation type="journal article" date="2017" name="Sci. Rep.">
        <title>Recombinant tandem of pore-domains in a Weakly Inward rectifying K+ channel 2 (TWIK2) forms active lysosomal channels.</title>
        <authorList>
            <person name="Bobak N."/>
            <person name="Feliciangeli S."/>
            <person name="Chen C.C."/>
            <person name="Ben Soussia I."/>
            <person name="Bittner S."/>
            <person name="Pagnotta S."/>
            <person name="Ruck T."/>
            <person name="Biel M."/>
            <person name="Wahl-Schott C."/>
            <person name="Grimm C."/>
            <person name="Meuth S.G."/>
            <person name="Lesage F."/>
        </authorList>
    </citation>
    <scope>FUNCTION</scope>
    <scope>TRANSPORTER ACTIVITY</scope>
    <scope>SUBCELLULAR LOCATION</scope>
    <scope>MUTAGENESIS OF ILE-289; LEU-290 AND TYR-308</scope>
</reference>
<name>KCNK6_HUMAN</name>
<proteinExistence type="evidence at protein level"/>
<feature type="chain" id="PRO_0000101750" description="Potassium channel subfamily K member 6">
    <location>
        <begin position="1"/>
        <end position="313"/>
    </location>
</feature>
<feature type="topological domain" description="Cytoplasmic" evidence="5">
    <location>
        <begin position="1"/>
        <end position="4"/>
    </location>
</feature>
<feature type="transmembrane region" description="Helical" evidence="5">
    <location>
        <begin position="5"/>
        <end position="25"/>
    </location>
</feature>
<feature type="intramembrane region" description="Pore-forming; Name=Pore-forming 1" evidence="5">
    <location>
        <begin position="90"/>
        <end position="115"/>
    </location>
</feature>
<feature type="transmembrane region" description="Helical" evidence="5">
    <location>
        <begin position="121"/>
        <end position="141"/>
    </location>
</feature>
<feature type="topological domain" description="Cytoplasmic" evidence="5">
    <location>
        <begin position="142"/>
        <end position="172"/>
    </location>
</feature>
<feature type="transmembrane region" description="Helical" evidence="5">
    <location>
        <begin position="173"/>
        <end position="193"/>
    </location>
</feature>
<feature type="intramembrane region" description="Pore-forming; Name=Pore-forming 2" evidence="5">
    <location>
        <begin position="199"/>
        <end position="223"/>
    </location>
</feature>
<feature type="transmembrane region" description="Helical" evidence="5">
    <location>
        <begin position="236"/>
        <end position="256"/>
    </location>
</feature>
<feature type="topological domain" description="Cytoplasmic" evidence="5">
    <location>
        <begin position="257"/>
        <end position="313"/>
    </location>
</feature>
<feature type="region of interest" description="Selectivity filter 1" evidence="3">
    <location>
        <begin position="106"/>
        <end position="111"/>
    </location>
</feature>
<feature type="region of interest" description="Selectivity filter 2" evidence="3">
    <location>
        <begin position="214"/>
        <end position="219"/>
    </location>
</feature>
<feature type="region of interest" description="Disordered" evidence="6">
    <location>
        <begin position="288"/>
        <end position="313"/>
    </location>
</feature>
<feature type="short sequence motif" description="Lysosomal targeting signal" evidence="1">
    <location>
        <begin position="282"/>
        <end position="290"/>
    </location>
</feature>
<feature type="short sequence motif" description="Lysosomal targeting signal" evidence="1">
    <location>
        <begin position="308"/>
        <end position="312"/>
    </location>
</feature>
<feature type="compositionally biased region" description="Polar residues" evidence="6">
    <location>
        <begin position="295"/>
        <end position="307"/>
    </location>
</feature>
<feature type="binding site" evidence="3">
    <location>
        <position position="106"/>
    </location>
    <ligand>
        <name>K(+)</name>
        <dbReference type="ChEBI" id="CHEBI:29103"/>
        <label>1</label>
    </ligand>
</feature>
<feature type="binding site" evidence="3">
    <location>
        <position position="106"/>
    </location>
    <ligand>
        <name>K(+)</name>
        <dbReference type="ChEBI" id="CHEBI:29103"/>
        <label>4</label>
    </ligand>
</feature>
<feature type="binding site" evidence="3">
    <location>
        <position position="107"/>
    </location>
    <ligand>
        <name>K(+)</name>
        <dbReference type="ChEBI" id="CHEBI:29103"/>
        <label>1</label>
    </ligand>
</feature>
<feature type="binding site" evidence="3">
    <location>
        <position position="107"/>
    </location>
    <ligand>
        <name>K(+)</name>
        <dbReference type="ChEBI" id="CHEBI:29103"/>
        <label>2</label>
    </ligand>
</feature>
<feature type="binding site" evidence="3">
    <location>
        <position position="108"/>
    </location>
    <ligand>
        <name>K(+)</name>
        <dbReference type="ChEBI" id="CHEBI:29103"/>
        <label>2</label>
    </ligand>
</feature>
<feature type="binding site" evidence="3">
    <location>
        <position position="108"/>
    </location>
    <ligand>
        <name>K(+)</name>
        <dbReference type="ChEBI" id="CHEBI:29103"/>
        <label>3</label>
    </ligand>
</feature>
<feature type="binding site" evidence="3">
    <location>
        <position position="109"/>
    </location>
    <ligand>
        <name>K(+)</name>
        <dbReference type="ChEBI" id="CHEBI:29103"/>
        <label>3</label>
    </ligand>
</feature>
<feature type="binding site" evidence="3">
    <location>
        <position position="214"/>
    </location>
    <ligand>
        <name>K(+)</name>
        <dbReference type="ChEBI" id="CHEBI:29103"/>
        <label>1</label>
    </ligand>
</feature>
<feature type="binding site" evidence="3">
    <location>
        <position position="214"/>
    </location>
    <ligand>
        <name>K(+)</name>
        <dbReference type="ChEBI" id="CHEBI:29103"/>
        <label>4</label>
    </ligand>
</feature>
<feature type="binding site" evidence="3">
    <location>
        <position position="215"/>
    </location>
    <ligand>
        <name>K(+)</name>
        <dbReference type="ChEBI" id="CHEBI:29103"/>
        <label>1</label>
    </ligand>
</feature>
<feature type="binding site" evidence="3">
    <location>
        <position position="215"/>
    </location>
    <ligand>
        <name>K(+)</name>
        <dbReference type="ChEBI" id="CHEBI:29103"/>
        <label>2</label>
    </ligand>
</feature>
<feature type="binding site" evidence="3">
    <location>
        <position position="216"/>
    </location>
    <ligand>
        <name>K(+)</name>
        <dbReference type="ChEBI" id="CHEBI:29103"/>
        <label>2</label>
    </ligand>
</feature>
<feature type="binding site" evidence="3">
    <location>
        <position position="216"/>
    </location>
    <ligand>
        <name>K(+)</name>
        <dbReference type="ChEBI" id="CHEBI:29103"/>
        <label>3</label>
    </ligand>
</feature>
<feature type="glycosylation site" description="N-linked (GlcNAc...) asparagine" evidence="5">
    <location>
        <position position="79"/>
    </location>
</feature>
<feature type="glycosylation site" description="N-linked (GlcNAc...) asparagine" evidence="5">
    <location>
        <position position="85"/>
    </location>
</feature>
<feature type="disulfide bond" description="Interchain (with C-53)" evidence="1 3">
    <location>
        <position position="53"/>
    </location>
</feature>
<feature type="splice variant" id="VSP_006692" description="In isoform 2." evidence="12">
    <location>
        <begin position="1"/>
        <end position="134"/>
    </location>
</feature>
<feature type="sequence variant" id="VAR_052426" description="In dbSNP:rs35762773.">
    <original>T</original>
    <variation>I</variation>
    <location>
        <position position="150"/>
    </location>
</feature>
<feature type="sequence variant" id="VAR_059842" description="In dbSNP:rs35496032.">
    <original>V</original>
    <variation>I</variation>
    <location>
        <position position="240"/>
    </location>
</feature>
<feature type="sequence variant" id="VAR_052427" description="In dbSNP:rs34989303.">
    <original>V</original>
    <variation>M</variation>
    <location>
        <position position="259"/>
    </location>
</feature>
<feature type="mutagenesis site" description="No channel activity." evidence="7">
    <original>C</original>
    <variation>A</variation>
    <location>
        <position position="53"/>
    </location>
</feature>
<feature type="mutagenesis site" description="Disrupts lysosomal targeting signal. Increases localization and K(+) current at the plasma membrane; when associated with A-290. Displays additive effects resulting in a 18-fold increase of K(+) current; when asociated with A-308." evidence="9">
    <original>I</original>
    <variation>A</variation>
    <location>
        <position position="289"/>
    </location>
</feature>
<feature type="mutagenesis site" description="Disrupts lysosomal targeting signal. Increases localization and K(+) current at the plasma membrane; when associated with A-289. Displays additive effects resulting in a 18-fold increase of K(+) current; when asociated with A-308." evidence="9">
    <original>L</original>
    <variation>A</variation>
    <location>
        <position position="290"/>
    </location>
</feature>
<feature type="mutagenesis site" description="Disrupts lysosomal targeting signal. Increases localization and K(+) current at the plasma membrane. Displays additive effects resulting in a 18-fold increase of K(+) current; when asociated with A-289 or A-290." evidence="9">
    <original>Y</original>
    <variation>A</variation>
    <location>
        <position position="308"/>
    </location>
</feature>
<gene>
    <name evidence="14" type="primary">KCNK6</name>
    <name evidence="11" type="synonym">TOSS</name>
    <name evidence="10" type="synonym">TWIK2</name>
</gene>